<evidence type="ECO:0000250" key="1"/>
<evidence type="ECO:0000255" key="2"/>
<evidence type="ECO:0000305" key="3"/>
<accession>A3MCH1</accession>
<reference key="1">
    <citation type="journal article" date="2010" name="Genome Biol. Evol.">
        <title>Continuing evolution of Burkholderia mallei through genome reduction and large-scale rearrangements.</title>
        <authorList>
            <person name="Losada L."/>
            <person name="Ronning C.M."/>
            <person name="DeShazer D."/>
            <person name="Woods D."/>
            <person name="Fedorova N."/>
            <person name="Kim H.S."/>
            <person name="Shabalina S.A."/>
            <person name="Pearson T.R."/>
            <person name="Brinkac L."/>
            <person name="Tan P."/>
            <person name="Nandi T."/>
            <person name="Crabtree J."/>
            <person name="Badger J."/>
            <person name="Beckstrom-Sternberg S."/>
            <person name="Saqib M."/>
            <person name="Schutzer S.E."/>
            <person name="Keim P."/>
            <person name="Nierman W.C."/>
        </authorList>
    </citation>
    <scope>NUCLEOTIDE SEQUENCE [LARGE SCALE GENOMIC DNA]</scope>
    <source>
        <strain>NCTC 10247</strain>
    </source>
</reference>
<comment type="function">
    <text evidence="1">Required for invasion of epithelial cells, as well as for survival within host cells, escape from endocytic vesicles and subsequent actin-tail formation. Probably regulates the secretion of effectors BipB and BipC and their final integration into the target cell membrane (By similarity).</text>
</comment>
<comment type="subcellular location">
    <subcellularLocation>
        <location evidence="1">Secreted</location>
    </subcellularLocation>
    <text evidence="1">Secreted via the bsa type III secretion system. Localizes to the tip of the external secretion needle that is part of the secretion apparatus (By similarity).</text>
</comment>
<comment type="domain">
    <text evidence="1">The N-terminal domain is an intra-molecular chaperone that prevents premature oligomerization of the residues on the coiled-coil region that are involved in interactions with the needle and/or itself. The residues in the C-terminal domain probably form oligomeric structures at the tip of the needle that are responsible for the regulation of secretion of other effectors (By similarity).</text>
</comment>
<comment type="similarity">
    <text evidence="3">Belongs to the invasin protein D family.</text>
</comment>
<proteinExistence type="inferred from homology"/>
<organism>
    <name type="scientific">Burkholderia mallei (strain NCTC 10247)</name>
    <dbReference type="NCBI Taxonomy" id="320389"/>
    <lineage>
        <taxon>Bacteria</taxon>
        <taxon>Pseudomonadati</taxon>
        <taxon>Pseudomonadota</taxon>
        <taxon>Betaproteobacteria</taxon>
        <taxon>Burkholderiales</taxon>
        <taxon>Burkholderiaceae</taxon>
        <taxon>Burkholderia</taxon>
        <taxon>pseudomallei group</taxon>
    </lineage>
</organism>
<sequence>MNMHVDMGRALTVRDWPALEALAKTMPADAGARAMTDDDLRAAGVDRRVPEQKLGAAIDEFASLRLPDRIDGRFVDGRRANLTVFDDARVAVRGHARAQRNLLERLETELLGGTLDTAGDEGGIQPDPILQGLVDVIGQGKSDIDAYATIVEGLTKYFQSVADVMSKLQDYISAKDDKNMKIDGGKIKALIQQVIDHLPTMQLPKGADIARWRKELGDAVSISDSGVVTINPDKLIKMRDSLPPDGTVWDTARYQAWNTAFSGQKDNIQNDVQTLVEKYSHQNSNFDNLVKVLSGAISTLTDTAKSYLQI</sequence>
<keyword id="KW-0175">Coiled coil</keyword>
<keyword id="KW-0964">Secreted</keyword>
<keyword id="KW-0843">Virulence</keyword>
<protein>
    <recommendedName>
        <fullName>Translocator protein BipD</fullName>
    </recommendedName>
</protein>
<dbReference type="EMBL" id="CP000547">
    <property type="protein sequence ID" value="ABO02884.1"/>
    <property type="molecule type" value="Genomic_DNA"/>
</dbReference>
<dbReference type="RefSeq" id="WP_004188590.1">
    <property type="nucleotide sequence ID" value="NZ_CP007801.1"/>
</dbReference>
<dbReference type="SMR" id="A3MCH1"/>
<dbReference type="GeneID" id="93063709"/>
<dbReference type="KEGG" id="bmaz:BM44_4989"/>
<dbReference type="KEGG" id="bmn:BMA10247_A0757"/>
<dbReference type="PATRIC" id="fig|320389.8.peg.5725"/>
<dbReference type="GO" id="GO:0005576">
    <property type="term" value="C:extracellular region"/>
    <property type="evidence" value="ECO:0007669"/>
    <property type="project" value="UniProtKB-SubCell"/>
</dbReference>
<dbReference type="Gene3D" id="1.20.1710.10">
    <property type="entry name" value="IpaD-like"/>
    <property type="match status" value="1"/>
</dbReference>
<dbReference type="InterPro" id="IPR036708">
    <property type="entry name" value="BipD-like_sf"/>
</dbReference>
<dbReference type="InterPro" id="IPR009483">
    <property type="entry name" value="IpaD/BipD/SipD"/>
</dbReference>
<dbReference type="NCBIfam" id="TIGR02553">
    <property type="entry name" value="SipD_IpaD_SspD"/>
    <property type="match status" value="1"/>
</dbReference>
<dbReference type="Pfam" id="PF06511">
    <property type="entry name" value="T3SS_TC"/>
    <property type="match status" value="1"/>
</dbReference>
<dbReference type="SUPFAM" id="SSF140693">
    <property type="entry name" value="IpaD-like"/>
    <property type="match status" value="1"/>
</dbReference>
<feature type="chain" id="PRO_0000344003" description="Translocator protein BipD">
    <location>
        <begin position="1"/>
        <end position="310"/>
    </location>
</feature>
<feature type="coiled-coil region" evidence="2">
    <location>
        <begin position="127"/>
        <end position="171"/>
    </location>
</feature>
<feature type="coiled-coil region" evidence="2">
    <location>
        <begin position="250"/>
        <end position="299"/>
    </location>
</feature>
<gene>
    <name type="primary">bipD</name>
    <name type="ordered locus">BMA10247_A0757</name>
</gene>
<name>BIPD_BURM7</name>